<comment type="function">
    <text evidence="1">Adapter required to activate the JNK and NF-kappa-B signaling pathways through the specific recognition of 'Lys-63'-linked polyubiquitin chains by its RanBP2-type zinc finger (NZF). Acts as an adapter linking MAP3K7/TAK1 and TRAF6 to 'Lys-63'-linked polyubiquitin chains. The RanBP2-type zinc finger (NZF) specifically recognizes Lys-63'-linked polyubiquitin chains unanchored or anchored to the substrate proteins such as RIPK1/RIP1 and RIPK2: this acts as a scaffold to organize a large signaling complex to promote autophosphorylation of MAP3K7/TAK1, and subsequent activation of I-kappa-B-kinase (IKK) core complex by MAP3K7/TAK1.</text>
</comment>
<comment type="subunit">
    <text evidence="1">Interacts with TAB1, TAB2, MAP3K7, TRAF2 and TRAF6. The minimal TAB3-containing complex (TAB1-MAP3K7-TAB3) appears not to contain TAB2. However, it seems sensible to consider that TAB2 may also join this complex and may act in a cooperative manner with TAB3. Interacts with DYNC2I2 (via the WD domains). Interacts with RBCK1. Binds 'Lys-63'-linked polyubiquitin chains. Interacts with TRIM5. Interacts with TRIM38 (via B30.2/SPRY domain), leading to its translocation to lysosomes and degradation. Interacts with ASB1.</text>
</comment>
<comment type="interaction">
    <interactant intactId="EBI-7606337">
        <id>Q571K4</id>
    </interactant>
    <interactant intactId="EBI-413074">
        <id>P62991</id>
        <label>Ubc</label>
    </interactant>
    <organismsDiffer>false</organismsDiffer>
    <experiments>2</experiments>
</comment>
<comment type="domain">
    <text evidence="6">The RanBP2-type zinc finger (NZF) mediates binding to two consecutive 'Lys-63'-linked ubiquitins.</text>
</comment>
<comment type="PTM">
    <text evidence="1">Ubiquitinated; following IL1 stimulation or TRAF6 overexpression. Ubiquitinated by AMFR via 'Lys-27'-linked polyubiquitination; leading to TAK1/MAP3K7 activation.</text>
</comment>
<comment type="PTM">
    <text evidence="1">Degraded in a lysosome-dependent manner following interaction with TRIM38.</text>
</comment>
<comment type="PTM">
    <text evidence="1">Phosphorylated at Ser-510 by MAPKAPK2 and MAPKAPK3 following IL1 treatment.</text>
</comment>
<comment type="sequence caution" evidence="7">
    <conflict type="erroneous initiation">
        <sequence resource="EMBL-CDS" id="BAD90370"/>
    </conflict>
</comment>
<feature type="initiator methionine" description="Removed" evidence="1">
    <location>
        <position position="1"/>
    </location>
</feature>
<feature type="chain" id="PRO_0000226973" description="TGF-beta-activated kinase 1 and MAP3K7-binding protein 3">
    <location>
        <begin position="2"/>
        <end position="716"/>
    </location>
</feature>
<feature type="domain" description="CUE" evidence="4">
    <location>
        <begin position="8"/>
        <end position="51"/>
    </location>
</feature>
<feature type="zinc finger region" description="RanBP2-type" evidence="3">
    <location>
        <begin position="686"/>
        <end position="716"/>
    </location>
</feature>
<feature type="region of interest" description="Disordered" evidence="5">
    <location>
        <begin position="141"/>
        <end position="189"/>
    </location>
</feature>
<feature type="region of interest" description="Disordered" evidence="5">
    <location>
        <begin position="227"/>
        <end position="349"/>
    </location>
</feature>
<feature type="region of interest" description="Disordered" evidence="5">
    <location>
        <begin position="373"/>
        <end position="433"/>
    </location>
</feature>
<feature type="region of interest" description="Disordered" evidence="5">
    <location>
        <begin position="479"/>
        <end position="513"/>
    </location>
</feature>
<feature type="coiled-coil region" evidence="2">
    <location>
        <begin position="521"/>
        <end position="564"/>
    </location>
</feature>
<feature type="compositionally biased region" description="Polar residues" evidence="5">
    <location>
        <begin position="163"/>
        <end position="173"/>
    </location>
</feature>
<feature type="compositionally biased region" description="Low complexity" evidence="5">
    <location>
        <begin position="233"/>
        <end position="246"/>
    </location>
</feature>
<feature type="compositionally biased region" description="Low complexity" evidence="5">
    <location>
        <begin position="269"/>
        <end position="290"/>
    </location>
</feature>
<feature type="compositionally biased region" description="Polar residues" evidence="5">
    <location>
        <begin position="375"/>
        <end position="408"/>
    </location>
</feature>
<feature type="compositionally biased region" description="Low complexity" evidence="5">
    <location>
        <begin position="409"/>
        <end position="421"/>
    </location>
</feature>
<feature type="modified residue" description="N-acetylalanine" evidence="1">
    <location>
        <position position="2"/>
    </location>
</feature>
<feature type="modified residue" description="Phosphoserine" evidence="1">
    <location>
        <position position="60"/>
    </location>
</feature>
<feature type="modified residue" description="Phosphoserine" evidence="1">
    <location>
        <position position="101"/>
    </location>
</feature>
<feature type="modified residue" description="Phosphoserine" evidence="1">
    <location>
        <position position="103"/>
    </location>
</feature>
<feature type="modified residue" description="Phosphoserine" evidence="1">
    <location>
        <position position="389"/>
    </location>
</feature>
<feature type="modified residue" description="Phosphothreonine" evidence="1">
    <location>
        <position position="408"/>
    </location>
</feature>
<feature type="modified residue" description="Phosphoserine" evidence="1">
    <location>
        <position position="413"/>
    </location>
</feature>
<feature type="modified residue" description="Phosphoserine" evidence="1">
    <location>
        <position position="496"/>
    </location>
</feature>
<feature type="modified residue" description="Phosphoserine; by MAPKAPK2 and MAPKAPK3" evidence="1">
    <location>
        <position position="510"/>
    </location>
</feature>
<feature type="turn" evidence="8">
    <location>
        <begin position="694"/>
        <end position="696"/>
    </location>
</feature>
<feature type="turn" evidence="8">
    <location>
        <begin position="708"/>
        <end position="710"/>
    </location>
</feature>
<accession>Q571K4</accession>
<name>TAB3_MOUSE</name>
<keyword id="KW-0002">3D-structure</keyword>
<keyword id="KW-0007">Acetylation</keyword>
<keyword id="KW-0175">Coiled coil</keyword>
<keyword id="KW-0479">Metal-binding</keyword>
<keyword id="KW-0597">Phosphoprotein</keyword>
<keyword id="KW-1185">Reference proteome</keyword>
<keyword id="KW-0832">Ubl conjugation</keyword>
<keyword id="KW-0862">Zinc</keyword>
<keyword id="KW-0863">Zinc-finger</keyword>
<gene>
    <name type="primary">Tab3</name>
    <name type="synonym">Kiaa4135</name>
    <name type="synonym">Map3k7ip3</name>
</gene>
<proteinExistence type="evidence at protein level"/>
<dbReference type="EMBL" id="AK220185">
    <property type="protein sequence ID" value="BAD90370.1"/>
    <property type="status" value="ALT_INIT"/>
    <property type="molecule type" value="mRNA"/>
</dbReference>
<dbReference type="CCDS" id="CCDS41049.1"/>
<dbReference type="RefSeq" id="NP_001345376.1">
    <property type="nucleotide sequence ID" value="NM_001358447.1"/>
</dbReference>
<dbReference type="RefSeq" id="NP_080005.2">
    <property type="nucleotide sequence ID" value="NM_025729.4"/>
</dbReference>
<dbReference type="RefSeq" id="XP_006528301.1">
    <property type="nucleotide sequence ID" value="XM_006528238.5"/>
</dbReference>
<dbReference type="RefSeq" id="XP_006528302.1">
    <property type="nucleotide sequence ID" value="XM_006528239.4"/>
</dbReference>
<dbReference type="RefSeq" id="XP_017174093.1">
    <property type="nucleotide sequence ID" value="XM_017318604.1"/>
</dbReference>
<dbReference type="RefSeq" id="XP_030107336.1">
    <property type="nucleotide sequence ID" value="XM_030251476.2"/>
</dbReference>
<dbReference type="RefSeq" id="XP_030107337.1">
    <property type="nucleotide sequence ID" value="XM_030251477.2"/>
</dbReference>
<dbReference type="RefSeq" id="XP_030107338.1">
    <property type="nucleotide sequence ID" value="XM_030251478.2"/>
</dbReference>
<dbReference type="RefSeq" id="XP_030107339.1">
    <property type="nucleotide sequence ID" value="XM_030251479.2"/>
</dbReference>
<dbReference type="PDB" id="3A9K">
    <property type="method" value="X-ray"/>
    <property type="resolution" value="1.40 A"/>
    <property type="chains" value="C=688-716"/>
</dbReference>
<dbReference type="PDBsum" id="3A9K"/>
<dbReference type="SMR" id="Q571K4"/>
<dbReference type="BioGRID" id="211673">
    <property type="interactions" value="12"/>
</dbReference>
<dbReference type="FunCoup" id="Q571K4">
    <property type="interactions" value="2084"/>
</dbReference>
<dbReference type="IntAct" id="Q571K4">
    <property type="interactions" value="1"/>
</dbReference>
<dbReference type="MINT" id="Q571K4"/>
<dbReference type="STRING" id="10090.ENSMUSP00000039668"/>
<dbReference type="GlyGen" id="Q571K4">
    <property type="glycosylation" value="9 sites, 1 O-linked glycan (9 sites)"/>
</dbReference>
<dbReference type="iPTMnet" id="Q571K4"/>
<dbReference type="PhosphoSitePlus" id="Q571K4"/>
<dbReference type="jPOST" id="Q571K4"/>
<dbReference type="PaxDb" id="10090-ENSMUSP00000039668"/>
<dbReference type="ProteomicsDB" id="263240"/>
<dbReference type="Pumba" id="Q571K4"/>
<dbReference type="Antibodypedia" id="24709">
    <property type="antibodies" value="296 antibodies from 39 providers"/>
</dbReference>
<dbReference type="Ensembl" id="ENSMUST00000048250.10">
    <property type="protein sequence ID" value="ENSMUSP00000039668.4"/>
    <property type="gene ID" value="ENSMUSG00000035476.10"/>
</dbReference>
<dbReference type="GeneID" id="66724"/>
<dbReference type="KEGG" id="mmu:66724"/>
<dbReference type="UCSC" id="uc009trt.2">
    <property type="organism name" value="mouse"/>
</dbReference>
<dbReference type="AGR" id="MGI:1913974"/>
<dbReference type="CTD" id="257397"/>
<dbReference type="MGI" id="MGI:1913974">
    <property type="gene designation" value="Tab3"/>
</dbReference>
<dbReference type="VEuPathDB" id="HostDB:ENSMUSG00000035476"/>
<dbReference type="eggNOG" id="ENOG502QVTR">
    <property type="taxonomic scope" value="Eukaryota"/>
</dbReference>
<dbReference type="GeneTree" id="ENSGT00940000159499"/>
<dbReference type="HOGENOM" id="CLU_025065_1_0_1"/>
<dbReference type="InParanoid" id="Q571K4"/>
<dbReference type="OMA" id="WACNLCT"/>
<dbReference type="OrthoDB" id="6288762at2759"/>
<dbReference type="PhylomeDB" id="Q571K4"/>
<dbReference type="TreeFam" id="TF332021"/>
<dbReference type="Reactome" id="R-MMU-168638">
    <property type="pathway name" value="NOD1/2 Signaling Pathway"/>
</dbReference>
<dbReference type="Reactome" id="R-MMU-2871837">
    <property type="pathway name" value="FCERI mediated NF-kB activation"/>
</dbReference>
<dbReference type="Reactome" id="R-MMU-445989">
    <property type="pathway name" value="TAK1-dependent IKK and NF-kappa-B activation"/>
</dbReference>
<dbReference type="Reactome" id="R-MMU-450302">
    <property type="pathway name" value="activated TAK1 mediates p38 MAPK activation"/>
</dbReference>
<dbReference type="Reactome" id="R-MMU-450321">
    <property type="pathway name" value="JNK (c-Jun kinases) phosphorylation and activation mediated by activated human TAK1"/>
</dbReference>
<dbReference type="Reactome" id="R-MMU-5357956">
    <property type="pathway name" value="TNFR1-induced NF-kappa-B signaling pathway"/>
</dbReference>
<dbReference type="Reactome" id="R-MMU-5607764">
    <property type="pathway name" value="CLEC7A (Dectin-1) signaling"/>
</dbReference>
<dbReference type="Reactome" id="R-MMU-9020702">
    <property type="pathway name" value="Interleukin-1 signaling"/>
</dbReference>
<dbReference type="Reactome" id="R-MMU-937042">
    <property type="pathway name" value="IRAK2 mediated activation of TAK1 complex"/>
</dbReference>
<dbReference type="Reactome" id="R-MMU-937072">
    <property type="pathway name" value="TRAF6-mediated induction of TAK1 complex within TLR4 complex"/>
</dbReference>
<dbReference type="Reactome" id="R-MMU-9645460">
    <property type="pathway name" value="Alpha-protein kinase 1 signaling pathway"/>
</dbReference>
<dbReference type="Reactome" id="R-MMU-975163">
    <property type="pathway name" value="IRAK2 mediated activation of TAK1 complex upon TLR7/8 or 9 stimulation"/>
</dbReference>
<dbReference type="BioGRID-ORCS" id="66724">
    <property type="hits" value="2 hits in 77 CRISPR screens"/>
</dbReference>
<dbReference type="ChiTaRS" id="Tab3">
    <property type="organism name" value="mouse"/>
</dbReference>
<dbReference type="EvolutionaryTrace" id="Q571K4"/>
<dbReference type="PRO" id="PR:Q571K4"/>
<dbReference type="Proteomes" id="UP000000589">
    <property type="component" value="Chromosome X"/>
</dbReference>
<dbReference type="RNAct" id="Q571K4">
    <property type="molecule type" value="protein"/>
</dbReference>
<dbReference type="Bgee" id="ENSMUSG00000035476">
    <property type="expression patterns" value="Expressed in metanephric ureteric bud and 258 other cell types or tissues"/>
</dbReference>
<dbReference type="ExpressionAtlas" id="Q571K4">
    <property type="expression patterns" value="baseline and differential"/>
</dbReference>
<dbReference type="GO" id="GO:0005783">
    <property type="term" value="C:endoplasmic reticulum"/>
    <property type="evidence" value="ECO:0007669"/>
    <property type="project" value="Ensembl"/>
</dbReference>
<dbReference type="GO" id="GO:0070530">
    <property type="term" value="F:K63-linked polyubiquitin modification-dependent protein binding"/>
    <property type="evidence" value="ECO:0000250"/>
    <property type="project" value="UniProtKB"/>
</dbReference>
<dbReference type="GO" id="GO:0060090">
    <property type="term" value="F:molecular adaptor activity"/>
    <property type="evidence" value="ECO:0007669"/>
    <property type="project" value="Ensembl"/>
</dbReference>
<dbReference type="GO" id="GO:0043130">
    <property type="term" value="F:ubiquitin binding"/>
    <property type="evidence" value="ECO:0007669"/>
    <property type="project" value="InterPro"/>
</dbReference>
<dbReference type="GO" id="GO:0008270">
    <property type="term" value="F:zinc ion binding"/>
    <property type="evidence" value="ECO:0000250"/>
    <property type="project" value="UniProtKB"/>
</dbReference>
<dbReference type="GO" id="GO:0042742">
    <property type="term" value="P:defense response to bacterium"/>
    <property type="evidence" value="ECO:0007669"/>
    <property type="project" value="Ensembl"/>
</dbReference>
<dbReference type="GO" id="GO:0038061">
    <property type="term" value="P:non-canonical NF-kappaB signal transduction"/>
    <property type="evidence" value="ECO:0007669"/>
    <property type="project" value="Ensembl"/>
</dbReference>
<dbReference type="GO" id="GO:0043123">
    <property type="term" value="P:positive regulation of canonical NF-kappaB signal transduction"/>
    <property type="evidence" value="ECO:0000250"/>
    <property type="project" value="UniProtKB"/>
</dbReference>
<dbReference type="CDD" id="cd14362">
    <property type="entry name" value="CUE_TAB2_TAB3"/>
    <property type="match status" value="1"/>
</dbReference>
<dbReference type="FunFam" id="1.10.8.10:FF:000025">
    <property type="entry name" value="TGF-beta-activated kinase 1 and MAP3K7-binding protein 3"/>
    <property type="match status" value="1"/>
</dbReference>
<dbReference type="Gene3D" id="1.10.8.10">
    <property type="entry name" value="DNA helicase RuvA subunit, C-terminal domain"/>
    <property type="match status" value="1"/>
</dbReference>
<dbReference type="Gene3D" id="2.30.30.380">
    <property type="entry name" value="Zn-finger domain of Sec23/24"/>
    <property type="match status" value="1"/>
</dbReference>
<dbReference type="InterPro" id="IPR003892">
    <property type="entry name" value="CUE"/>
</dbReference>
<dbReference type="InterPro" id="IPR041911">
    <property type="entry name" value="TAB2/3_CUE"/>
</dbReference>
<dbReference type="InterPro" id="IPR001876">
    <property type="entry name" value="Znf_RanBP2"/>
</dbReference>
<dbReference type="InterPro" id="IPR036443">
    <property type="entry name" value="Znf_RanBP2_sf"/>
</dbReference>
<dbReference type="PANTHER" id="PTHR46253:SF3">
    <property type="entry name" value="TGF-BETA-ACTIVATED KINASE 1 AND MAP3K7-BINDING PROTEIN 3"/>
    <property type="match status" value="1"/>
</dbReference>
<dbReference type="PANTHER" id="PTHR46253">
    <property type="entry name" value="TGF-BETA-ACTIVATED KINASE 1 AND MAP3K7-BINDING PROTEIN TAB"/>
    <property type="match status" value="1"/>
</dbReference>
<dbReference type="Pfam" id="PF02845">
    <property type="entry name" value="CUE"/>
    <property type="match status" value="1"/>
</dbReference>
<dbReference type="SMART" id="SM00546">
    <property type="entry name" value="CUE"/>
    <property type="match status" value="1"/>
</dbReference>
<dbReference type="SMART" id="SM00547">
    <property type="entry name" value="ZnF_RBZ"/>
    <property type="match status" value="1"/>
</dbReference>
<dbReference type="SUPFAM" id="SSF90209">
    <property type="entry name" value="Ran binding protein zinc finger-like"/>
    <property type="match status" value="1"/>
</dbReference>
<dbReference type="PROSITE" id="PS51140">
    <property type="entry name" value="CUE"/>
    <property type="match status" value="1"/>
</dbReference>
<dbReference type="PROSITE" id="PS01358">
    <property type="entry name" value="ZF_RANBP2_1"/>
    <property type="match status" value="1"/>
</dbReference>
<dbReference type="PROSITE" id="PS50199">
    <property type="entry name" value="ZF_RANBP2_2"/>
    <property type="match status" value="1"/>
</dbReference>
<evidence type="ECO:0000250" key="1">
    <source>
        <dbReference type="UniProtKB" id="Q8N5C8"/>
    </source>
</evidence>
<evidence type="ECO:0000255" key="2"/>
<evidence type="ECO:0000255" key="3">
    <source>
        <dbReference type="PROSITE-ProRule" id="PRU00322"/>
    </source>
</evidence>
<evidence type="ECO:0000255" key="4">
    <source>
        <dbReference type="PROSITE-ProRule" id="PRU00468"/>
    </source>
</evidence>
<evidence type="ECO:0000256" key="5">
    <source>
        <dbReference type="SAM" id="MobiDB-lite"/>
    </source>
</evidence>
<evidence type="ECO:0000269" key="6">
    <source>
    </source>
</evidence>
<evidence type="ECO:0000305" key="7"/>
<evidence type="ECO:0007829" key="8">
    <source>
        <dbReference type="PDB" id="3A9K"/>
    </source>
</evidence>
<sequence>MAQNSPQLDIQVLHDLRQRFPEIPEGVVSQCMLQNNNNLEACCRALSQESSKYLYMEYHSPEDNRMNRNRLLHINLGIHSPSSYHPGDGAHLNGGRTLVHSSSDGHIDPQHTAGKQLICLVQEPHSAPAVVAATPNYNPFFMNEQNRSAATPPSQPPQQPSSMQTGMNPSAMQGPSPPPPPPSYMHIPRYSTNPITVTVSQNLPSGQTVPRALQILPQIPSNLYGSPGSIFIRQTSQSSSGRQTPQNAPWQSSPQGPVPHYSQRPLPVYPHQQNYQPSQYSPKQQQIPQSVYHSPPPSQCPSPFSSPQHQVQPPQLGHPSSHVFMPPSPSTTPPHLYQQGPPSYQKPGSHSVAYLPYTASSLPKGSMKKIEITVEPSQRPGTAITRSPSPISNQPSPRNQHSLYTATTPPSSSPSRGISSQPKPPFSVNPVYITYTQPTGPSCAPSPSPRVIPNPTTVFKITVGRATTENLLNLVDQEERSAAPEPIQPISVIPGSGGEKGNHKYQRSSSSGSDDYAYTQALLLHQRARMERLAKQLKLEKEELERLKAEVNSMEHDLMQRRLRRVSCTTAIPTPEEMTRLRSTNRQLQINVDCTLKEVDLLQSRGNFDPKAINNFYDHIEPGPVVPPKPSKKDSSDSCAIERKARRISVTSKAPVDIHDAQAAAADEHLSICKQSARTQPRDEDYEGAPWNCDSCTFLNHPALNRCEQCEMPRYT</sequence>
<reference key="1">
    <citation type="journal article" date="2005" name="Science">
        <title>The transcriptional landscape of the mammalian genome.</title>
        <authorList>
            <person name="Carninci P."/>
            <person name="Kasukawa T."/>
            <person name="Katayama S."/>
            <person name="Gough J."/>
            <person name="Frith M.C."/>
            <person name="Maeda N."/>
            <person name="Oyama R."/>
            <person name="Ravasi T."/>
            <person name="Lenhard B."/>
            <person name="Wells C."/>
            <person name="Kodzius R."/>
            <person name="Shimokawa K."/>
            <person name="Bajic V.B."/>
            <person name="Brenner S.E."/>
            <person name="Batalov S."/>
            <person name="Forrest A.R."/>
            <person name="Zavolan M."/>
            <person name="Davis M.J."/>
            <person name="Wilming L.G."/>
            <person name="Aidinis V."/>
            <person name="Allen J.E."/>
            <person name="Ambesi-Impiombato A."/>
            <person name="Apweiler R."/>
            <person name="Aturaliya R.N."/>
            <person name="Bailey T.L."/>
            <person name="Bansal M."/>
            <person name="Baxter L."/>
            <person name="Beisel K.W."/>
            <person name="Bersano T."/>
            <person name="Bono H."/>
            <person name="Chalk A.M."/>
            <person name="Chiu K.P."/>
            <person name="Choudhary V."/>
            <person name="Christoffels A."/>
            <person name="Clutterbuck D.R."/>
            <person name="Crowe M.L."/>
            <person name="Dalla E."/>
            <person name="Dalrymple B.P."/>
            <person name="de Bono B."/>
            <person name="Della Gatta G."/>
            <person name="di Bernardo D."/>
            <person name="Down T."/>
            <person name="Engstrom P."/>
            <person name="Fagiolini M."/>
            <person name="Faulkner G."/>
            <person name="Fletcher C.F."/>
            <person name="Fukushima T."/>
            <person name="Furuno M."/>
            <person name="Futaki S."/>
            <person name="Gariboldi M."/>
            <person name="Georgii-Hemming P."/>
            <person name="Gingeras T.R."/>
            <person name="Gojobori T."/>
            <person name="Green R.E."/>
            <person name="Gustincich S."/>
            <person name="Harbers M."/>
            <person name="Hayashi Y."/>
            <person name="Hensch T.K."/>
            <person name="Hirokawa N."/>
            <person name="Hill D."/>
            <person name="Huminiecki L."/>
            <person name="Iacono M."/>
            <person name="Ikeo K."/>
            <person name="Iwama A."/>
            <person name="Ishikawa T."/>
            <person name="Jakt M."/>
            <person name="Kanapin A."/>
            <person name="Katoh M."/>
            <person name="Kawasawa Y."/>
            <person name="Kelso J."/>
            <person name="Kitamura H."/>
            <person name="Kitano H."/>
            <person name="Kollias G."/>
            <person name="Krishnan S.P."/>
            <person name="Kruger A."/>
            <person name="Kummerfeld S.K."/>
            <person name="Kurochkin I.V."/>
            <person name="Lareau L.F."/>
            <person name="Lazarevic D."/>
            <person name="Lipovich L."/>
            <person name="Liu J."/>
            <person name="Liuni S."/>
            <person name="McWilliam S."/>
            <person name="Madan Babu M."/>
            <person name="Madera M."/>
            <person name="Marchionni L."/>
            <person name="Matsuda H."/>
            <person name="Matsuzawa S."/>
            <person name="Miki H."/>
            <person name="Mignone F."/>
            <person name="Miyake S."/>
            <person name="Morris K."/>
            <person name="Mottagui-Tabar S."/>
            <person name="Mulder N."/>
            <person name="Nakano N."/>
            <person name="Nakauchi H."/>
            <person name="Ng P."/>
            <person name="Nilsson R."/>
            <person name="Nishiguchi S."/>
            <person name="Nishikawa S."/>
            <person name="Nori F."/>
            <person name="Ohara O."/>
            <person name="Okazaki Y."/>
            <person name="Orlando V."/>
            <person name="Pang K.C."/>
            <person name="Pavan W.J."/>
            <person name="Pavesi G."/>
            <person name="Pesole G."/>
            <person name="Petrovsky N."/>
            <person name="Piazza S."/>
            <person name="Reed J."/>
            <person name="Reid J.F."/>
            <person name="Ring B.Z."/>
            <person name="Ringwald M."/>
            <person name="Rost B."/>
            <person name="Ruan Y."/>
            <person name="Salzberg S.L."/>
            <person name="Sandelin A."/>
            <person name="Schneider C."/>
            <person name="Schoenbach C."/>
            <person name="Sekiguchi K."/>
            <person name="Semple C.A."/>
            <person name="Seno S."/>
            <person name="Sessa L."/>
            <person name="Sheng Y."/>
            <person name="Shibata Y."/>
            <person name="Shimada H."/>
            <person name="Shimada K."/>
            <person name="Silva D."/>
            <person name="Sinclair B."/>
            <person name="Sperling S."/>
            <person name="Stupka E."/>
            <person name="Sugiura K."/>
            <person name="Sultana R."/>
            <person name="Takenaka Y."/>
            <person name="Taki K."/>
            <person name="Tammoja K."/>
            <person name="Tan S.L."/>
            <person name="Tang S."/>
            <person name="Taylor M.S."/>
            <person name="Tegner J."/>
            <person name="Teichmann S.A."/>
            <person name="Ueda H.R."/>
            <person name="van Nimwegen E."/>
            <person name="Verardo R."/>
            <person name="Wei C.L."/>
            <person name="Yagi K."/>
            <person name="Yamanishi H."/>
            <person name="Zabarovsky E."/>
            <person name="Zhu S."/>
            <person name="Zimmer A."/>
            <person name="Hide W."/>
            <person name="Bult C."/>
            <person name="Grimmond S.M."/>
            <person name="Teasdale R.D."/>
            <person name="Liu E.T."/>
            <person name="Brusic V."/>
            <person name="Quackenbush J."/>
            <person name="Wahlestedt C."/>
            <person name="Mattick J.S."/>
            <person name="Hume D.A."/>
            <person name="Kai C."/>
            <person name="Sasaki D."/>
            <person name="Tomaru Y."/>
            <person name="Fukuda S."/>
            <person name="Kanamori-Katayama M."/>
            <person name="Suzuki M."/>
            <person name="Aoki J."/>
            <person name="Arakawa T."/>
            <person name="Iida J."/>
            <person name="Imamura K."/>
            <person name="Itoh M."/>
            <person name="Kato T."/>
            <person name="Kawaji H."/>
            <person name="Kawagashira N."/>
            <person name="Kawashima T."/>
            <person name="Kojima M."/>
            <person name="Kondo S."/>
            <person name="Konno H."/>
            <person name="Nakano K."/>
            <person name="Ninomiya N."/>
            <person name="Nishio T."/>
            <person name="Okada M."/>
            <person name="Plessy C."/>
            <person name="Shibata K."/>
            <person name="Shiraki T."/>
            <person name="Suzuki S."/>
            <person name="Tagami M."/>
            <person name="Waki K."/>
            <person name="Watahiki A."/>
            <person name="Okamura-Oho Y."/>
            <person name="Suzuki H."/>
            <person name="Kawai J."/>
            <person name="Hayashizaki Y."/>
        </authorList>
    </citation>
    <scope>NUCLEOTIDE SEQUENCE [LARGE SCALE MRNA]</scope>
    <source>
        <tissue>Embryonic tail</tissue>
    </source>
</reference>
<reference key="2">
    <citation type="journal article" date="2010" name="Cell">
        <title>A tissue-specific atlas of mouse protein phosphorylation and expression.</title>
        <authorList>
            <person name="Huttlin E.L."/>
            <person name="Jedrychowski M.P."/>
            <person name="Elias J.E."/>
            <person name="Goswami T."/>
            <person name="Rad R."/>
            <person name="Beausoleil S.A."/>
            <person name="Villen J."/>
            <person name="Haas W."/>
            <person name="Sowa M.E."/>
            <person name="Gygi S.P."/>
        </authorList>
    </citation>
    <scope>IDENTIFICATION BY MASS SPECTROMETRY [LARGE SCALE ANALYSIS]</scope>
    <source>
        <tissue>Heart</tissue>
        <tissue>Spleen</tissue>
    </source>
</reference>
<reference key="3">
    <citation type="journal article" date="2009" name="EMBO J.">
        <title>Structural basis for specific recognition of Lys 63-linked polyubiquitin chains by NZF domains of TAB2 and TAB3.</title>
        <authorList>
            <person name="Sato Y."/>
            <person name="Yoshikawa A."/>
            <person name="Yamashita M."/>
            <person name="Yamagata A."/>
            <person name="Fukai S."/>
        </authorList>
    </citation>
    <scope>X-RAY CRYSTALLOGRAPHY (1.4 ANGSTROMS) OF 688-716 IN COMPLEX WITH 'LYS-63'-LINKED DI-UBIQUITIN</scope>
    <scope>NZF DOMAIN</scope>
    <scope>INTERACTION WITH UBIQUITIN</scope>
    <scope>SUBUNIT</scope>
</reference>
<protein>
    <recommendedName>
        <fullName>TGF-beta-activated kinase 1 and MAP3K7-binding protein 3</fullName>
    </recommendedName>
    <alternativeName>
        <fullName>Mitogen-activated protein kinase kinase kinase 7-interacting protein 3</fullName>
    </alternativeName>
    <alternativeName>
        <fullName>TAK1-binding protein 3</fullName>
        <shortName>TAB-3</shortName>
    </alternativeName>
    <alternativeName>
        <fullName>TGF-beta-activated kinase 1-binding protein 3</fullName>
    </alternativeName>
</protein>
<organism>
    <name type="scientific">Mus musculus</name>
    <name type="common">Mouse</name>
    <dbReference type="NCBI Taxonomy" id="10090"/>
    <lineage>
        <taxon>Eukaryota</taxon>
        <taxon>Metazoa</taxon>
        <taxon>Chordata</taxon>
        <taxon>Craniata</taxon>
        <taxon>Vertebrata</taxon>
        <taxon>Euteleostomi</taxon>
        <taxon>Mammalia</taxon>
        <taxon>Eutheria</taxon>
        <taxon>Euarchontoglires</taxon>
        <taxon>Glires</taxon>
        <taxon>Rodentia</taxon>
        <taxon>Myomorpha</taxon>
        <taxon>Muroidea</taxon>
        <taxon>Muridae</taxon>
        <taxon>Murinae</taxon>
        <taxon>Mus</taxon>
        <taxon>Mus</taxon>
    </lineage>
</organism>